<dbReference type="EMBL" id="S52437">
    <property type="protein sequence ID" value="AAB24796.2"/>
    <property type="molecule type" value="Genomic_DNA"/>
</dbReference>
<dbReference type="RefSeq" id="WP_032488557.1">
    <property type="nucleotide sequence ID" value="NG_048191.1"/>
</dbReference>
<dbReference type="SMR" id="P51563"/>
<dbReference type="GO" id="GO:0005886">
    <property type="term" value="C:plasma membrane"/>
    <property type="evidence" value="ECO:0007669"/>
    <property type="project" value="UniProtKB-SubCell"/>
</dbReference>
<dbReference type="GO" id="GO:0015297">
    <property type="term" value="F:antiporter activity"/>
    <property type="evidence" value="ECO:0007669"/>
    <property type="project" value="UniProtKB-KW"/>
</dbReference>
<dbReference type="GO" id="GO:1902600">
    <property type="term" value="P:proton transmembrane transport"/>
    <property type="evidence" value="ECO:0007669"/>
    <property type="project" value="UniProtKB-KW"/>
</dbReference>
<dbReference type="GO" id="GO:0046677">
    <property type="term" value="P:response to antibiotic"/>
    <property type="evidence" value="ECO:0007669"/>
    <property type="project" value="UniProtKB-KW"/>
</dbReference>
<dbReference type="CDD" id="cd17388">
    <property type="entry name" value="MFS_TetA"/>
    <property type="match status" value="1"/>
</dbReference>
<dbReference type="Gene3D" id="1.20.1250.20">
    <property type="entry name" value="MFS general substrate transporter like domains"/>
    <property type="match status" value="1"/>
</dbReference>
<dbReference type="InterPro" id="IPR011701">
    <property type="entry name" value="MFS"/>
</dbReference>
<dbReference type="InterPro" id="IPR020846">
    <property type="entry name" value="MFS_dom"/>
</dbReference>
<dbReference type="InterPro" id="IPR036259">
    <property type="entry name" value="MFS_trans_sf"/>
</dbReference>
<dbReference type="InterPro" id="IPR005829">
    <property type="entry name" value="Sugar_transporter_CS"/>
</dbReference>
<dbReference type="InterPro" id="IPR001958">
    <property type="entry name" value="Tet-R_TetA/multi-R_MdtG-like"/>
</dbReference>
<dbReference type="NCBIfam" id="NF012174">
    <property type="entry name" value="tet_MFS_A_B_C_D"/>
    <property type="match status" value="1"/>
</dbReference>
<dbReference type="NCBIfam" id="NF012192">
    <property type="entry name" value="tet_MFS_G"/>
    <property type="match status" value="1"/>
</dbReference>
<dbReference type="PANTHER" id="PTHR23504:SF15">
    <property type="entry name" value="MAJOR FACILITATOR SUPERFAMILY (MFS) PROFILE DOMAIN-CONTAINING PROTEIN"/>
    <property type="match status" value="1"/>
</dbReference>
<dbReference type="PANTHER" id="PTHR23504">
    <property type="entry name" value="MAJOR FACILITATOR SUPERFAMILY DOMAIN-CONTAINING PROTEIN 10"/>
    <property type="match status" value="1"/>
</dbReference>
<dbReference type="Pfam" id="PF07690">
    <property type="entry name" value="MFS_1"/>
    <property type="match status" value="2"/>
</dbReference>
<dbReference type="PRINTS" id="PR01035">
    <property type="entry name" value="TCRTETA"/>
</dbReference>
<dbReference type="SUPFAM" id="SSF103473">
    <property type="entry name" value="MFS general substrate transporter"/>
    <property type="match status" value="1"/>
</dbReference>
<dbReference type="PROSITE" id="PS50850">
    <property type="entry name" value="MFS"/>
    <property type="match status" value="1"/>
</dbReference>
<dbReference type="PROSITE" id="PS00216">
    <property type="entry name" value="SUGAR_TRANSPORT_1"/>
    <property type="match status" value="1"/>
</dbReference>
<protein>
    <recommendedName>
        <fullName>Tetracycline resistance protein, class G</fullName>
        <shortName>TetA(G)</shortName>
    </recommendedName>
</protein>
<keyword id="KW-0046">Antibiotic resistance</keyword>
<keyword id="KW-0050">Antiport</keyword>
<keyword id="KW-0997">Cell inner membrane</keyword>
<keyword id="KW-1003">Cell membrane</keyword>
<keyword id="KW-0375">Hydrogen ion transport</keyword>
<keyword id="KW-0406">Ion transport</keyword>
<keyword id="KW-0472">Membrane</keyword>
<keyword id="KW-0614">Plasmid</keyword>
<keyword id="KW-0812">Transmembrane</keyword>
<keyword id="KW-1133">Transmembrane helix</keyword>
<keyword id="KW-0813">Transport</keyword>
<evidence type="ECO:0000255" key="1"/>
<evidence type="ECO:0000305" key="2"/>
<sequence length="393" mass="40913">MRSSAIIALLIVGLDAMGLGLIMPVLPTLLRELVPAEQVAGHYGALLSLYALMQVVFAPMLGQLSDSYGRRPVLLASLAGAAVDYTIMASAPVLWVLYIGRLVSGVTGATGAVAASTIADSTGEGSRARWFGYMGACYGAGMIAGPALGGMLGGISAHAPFIAAALLNGFAFLLACIFLKETHHSHGGTGKPVRIKPFVLLRLDDALRGLGALFAVFFIIQLIGQVPAALWVIYGEDRFQWNTATVGLSLAAFGATHAIFQAFVTGPLSSRLGERRTLLFGMAADGTGFVLLAFATQGWMVFPILLLLAAGGVGMPALQAMLSNNVSSNKQGALQGTLTSLTNLSSIAGPLGFTALYSATAGAWNGWVWIVGAILYLICLPILRRPFATSLVI</sequence>
<reference key="1">
    <citation type="journal article" date="1992" name="Microbiol. Immunol.">
        <title>Nucleotide sequence analysis of the class G tetracycline resistance determinant from Vibrio anguillarum.</title>
        <authorList>
            <person name="Zhao J."/>
            <person name="Aoki T."/>
        </authorList>
    </citation>
    <scope>NUCLEOTIDE SEQUENCE [GENOMIC DNA]</scope>
    <source>
        <strain>MZ8122</strain>
    </source>
</reference>
<organism>
    <name type="scientific">Vibrio anguillarum</name>
    <name type="common">Listonella anguillarum</name>
    <dbReference type="NCBI Taxonomy" id="55601"/>
    <lineage>
        <taxon>Bacteria</taxon>
        <taxon>Pseudomonadati</taxon>
        <taxon>Pseudomonadota</taxon>
        <taxon>Gammaproteobacteria</taxon>
        <taxon>Vibrionales</taxon>
        <taxon>Vibrionaceae</taxon>
        <taxon>Vibrio</taxon>
    </lineage>
</organism>
<geneLocation type="plasmid">
    <name>pJAI22</name>
</geneLocation>
<feature type="chain" id="PRO_0000173397" description="Tetracycline resistance protein, class G">
    <location>
        <begin position="1"/>
        <end position="393"/>
    </location>
</feature>
<feature type="transmembrane region" description="Helical" evidence="1">
    <location>
        <begin position="6"/>
        <end position="26"/>
    </location>
</feature>
<feature type="transmembrane region" description="Helical" evidence="1">
    <location>
        <begin position="44"/>
        <end position="64"/>
    </location>
</feature>
<feature type="transmembrane region" description="Helical" evidence="1">
    <location>
        <begin position="79"/>
        <end position="99"/>
    </location>
</feature>
<feature type="transmembrane region" description="Helical" evidence="1">
    <location>
        <begin position="102"/>
        <end position="122"/>
    </location>
</feature>
<feature type="transmembrane region" description="Helical" evidence="1">
    <location>
        <begin position="135"/>
        <end position="155"/>
    </location>
</feature>
<feature type="transmembrane region" description="Helical" evidence="1">
    <location>
        <begin position="159"/>
        <end position="179"/>
    </location>
</feature>
<feature type="transmembrane region" description="Helical" evidence="1">
    <location>
        <begin position="213"/>
        <end position="233"/>
    </location>
</feature>
<feature type="transmembrane region" description="Helical" evidence="1">
    <location>
        <begin position="244"/>
        <end position="264"/>
    </location>
</feature>
<feature type="transmembrane region" description="Helical" evidence="1">
    <location>
        <begin position="277"/>
        <end position="297"/>
    </location>
</feature>
<feature type="transmembrane region" description="Helical" evidence="1">
    <location>
        <begin position="298"/>
        <end position="318"/>
    </location>
</feature>
<feature type="transmembrane region" description="Helical" evidence="1">
    <location>
        <begin position="341"/>
        <end position="361"/>
    </location>
</feature>
<feature type="transmembrane region" description="Helical" evidence="1">
    <location>
        <begin position="363"/>
        <end position="383"/>
    </location>
</feature>
<accession>P51563</accession>
<name>TCR7_VIBAN</name>
<comment type="function">
    <text>Resistance to tetracycline by an active tetracycline efflux. This is an energy-dependent process that decreases the accumulation of the antibiotic in whole cells. This protein functions as a metal-tetracycline/H(+) antiporter.</text>
</comment>
<comment type="subcellular location">
    <subcellularLocation>
        <location>Cell inner membrane</location>
        <topology>Multi-pass membrane protein</topology>
    </subcellularLocation>
</comment>
<comment type="similarity">
    <text evidence="2">Belongs to the major facilitator superfamily. TCR/Tet family.</text>
</comment>
<gene>
    <name type="primary">tetA</name>
</gene>
<proteinExistence type="inferred from homology"/>